<protein>
    <recommendedName>
        <fullName evidence="1">Protoheme IX farnesyltransferase</fullName>
        <ecNumber evidence="1">2.5.1.141</ecNumber>
    </recommendedName>
    <alternativeName>
        <fullName evidence="1">Heme B farnesyltransferase</fullName>
    </alternativeName>
    <alternativeName>
        <fullName evidence="1">Heme O synthase</fullName>
    </alternativeName>
</protein>
<comment type="function">
    <text evidence="1">Converts heme B (protoheme IX) to heme O by substitution of the vinyl group on carbon 2 of heme B porphyrin ring with a hydroxyethyl farnesyl side group.</text>
</comment>
<comment type="catalytic activity">
    <reaction evidence="1">
        <text>heme b + (2E,6E)-farnesyl diphosphate + H2O = Fe(II)-heme o + diphosphate</text>
        <dbReference type="Rhea" id="RHEA:28070"/>
        <dbReference type="ChEBI" id="CHEBI:15377"/>
        <dbReference type="ChEBI" id="CHEBI:33019"/>
        <dbReference type="ChEBI" id="CHEBI:60344"/>
        <dbReference type="ChEBI" id="CHEBI:60530"/>
        <dbReference type="ChEBI" id="CHEBI:175763"/>
        <dbReference type="EC" id="2.5.1.141"/>
    </reaction>
</comment>
<comment type="pathway">
    <text evidence="1">Porphyrin-containing compound metabolism; heme O biosynthesis; heme O from protoheme: step 1/1.</text>
</comment>
<comment type="subcellular location">
    <subcellularLocation>
        <location evidence="1">Cell inner membrane</location>
        <topology evidence="1">Multi-pass membrane protein</topology>
    </subcellularLocation>
</comment>
<comment type="miscellaneous">
    <text evidence="1">Carbon 2 of the heme B porphyrin ring is defined according to the Fischer nomenclature.</text>
</comment>
<comment type="similarity">
    <text evidence="1">Belongs to the UbiA prenyltransferase family. Protoheme IX farnesyltransferase subfamily.</text>
</comment>
<gene>
    <name evidence="1" type="primary">cyoE</name>
    <name type="ordered locus">SO_4614</name>
</gene>
<organism>
    <name type="scientific">Shewanella oneidensis (strain ATCC 700550 / JCM 31522 / CIP 106686 / LMG 19005 / NCIMB 14063 / MR-1)</name>
    <dbReference type="NCBI Taxonomy" id="211586"/>
    <lineage>
        <taxon>Bacteria</taxon>
        <taxon>Pseudomonadati</taxon>
        <taxon>Pseudomonadota</taxon>
        <taxon>Gammaproteobacteria</taxon>
        <taxon>Alteromonadales</taxon>
        <taxon>Shewanellaceae</taxon>
        <taxon>Shewanella</taxon>
    </lineage>
</organism>
<evidence type="ECO:0000255" key="1">
    <source>
        <dbReference type="HAMAP-Rule" id="MF_00154"/>
    </source>
</evidence>
<proteinExistence type="inferred from homology"/>
<sequence length="300" mass="33136">MAKPLSISSQPSVNVAWRDYFEMTKPKVVALMLLTVLVGMCLAMPTILPVQPLIAGLLGIAMMAGSAAALNHLIDRRIDGLMARTYNRPLPKGRISATRALIFAAALGSLGFVILYVFTNPLTAWLTFASLIGYALIYTAYLKRATPQNIVIGGLAGAMPPLLGWTAVTNQFHGHALLLVIIIFLWTPPHFWALAIHRRAEYAKVDIPMLPVTHGVEFTKTCILLYTILLAIACLLPVLVGMSGPLYFVCSSALSCGFIYKAWQLKYQDHEGLAMQVFRFSIYHLMLLFMALLLDHYLWA</sequence>
<dbReference type="EC" id="2.5.1.141" evidence="1"/>
<dbReference type="EMBL" id="AE014299">
    <property type="protein sequence ID" value="AAN57574.1"/>
    <property type="molecule type" value="Genomic_DNA"/>
</dbReference>
<dbReference type="RefSeq" id="NP_720130.1">
    <property type="nucleotide sequence ID" value="NC_004347.2"/>
</dbReference>
<dbReference type="RefSeq" id="WP_011074210.1">
    <property type="nucleotide sequence ID" value="NC_004347.2"/>
</dbReference>
<dbReference type="SMR" id="Q8E8P7"/>
<dbReference type="STRING" id="211586.SO_4614"/>
<dbReference type="PaxDb" id="211586-SO_4614"/>
<dbReference type="KEGG" id="son:SO_4614"/>
<dbReference type="PATRIC" id="fig|211586.12.peg.4471"/>
<dbReference type="eggNOG" id="COG0109">
    <property type="taxonomic scope" value="Bacteria"/>
</dbReference>
<dbReference type="HOGENOM" id="CLU_029631_0_2_6"/>
<dbReference type="OrthoDB" id="9814417at2"/>
<dbReference type="PhylomeDB" id="Q8E8P7"/>
<dbReference type="BioCyc" id="SONE211586:G1GMP-4263-MONOMER"/>
<dbReference type="UniPathway" id="UPA00834">
    <property type="reaction ID" value="UER00712"/>
</dbReference>
<dbReference type="Proteomes" id="UP000008186">
    <property type="component" value="Chromosome"/>
</dbReference>
<dbReference type="GO" id="GO:0005886">
    <property type="term" value="C:plasma membrane"/>
    <property type="evidence" value="ECO:0007669"/>
    <property type="project" value="UniProtKB-SubCell"/>
</dbReference>
<dbReference type="GO" id="GO:0008495">
    <property type="term" value="F:protoheme IX farnesyltransferase activity"/>
    <property type="evidence" value="ECO:0000318"/>
    <property type="project" value="GO_Central"/>
</dbReference>
<dbReference type="GO" id="GO:0006783">
    <property type="term" value="P:heme biosynthetic process"/>
    <property type="evidence" value="ECO:0000318"/>
    <property type="project" value="GO_Central"/>
</dbReference>
<dbReference type="GO" id="GO:0048034">
    <property type="term" value="P:heme O biosynthetic process"/>
    <property type="evidence" value="ECO:0007669"/>
    <property type="project" value="UniProtKB-UniRule"/>
</dbReference>
<dbReference type="CDD" id="cd13957">
    <property type="entry name" value="PT_UbiA_Cox10"/>
    <property type="match status" value="1"/>
</dbReference>
<dbReference type="FunFam" id="1.10.357.140:FF:000001">
    <property type="entry name" value="Protoheme IX farnesyltransferase"/>
    <property type="match status" value="1"/>
</dbReference>
<dbReference type="Gene3D" id="1.10.357.140">
    <property type="entry name" value="UbiA prenyltransferase"/>
    <property type="match status" value="1"/>
</dbReference>
<dbReference type="HAMAP" id="MF_00154">
    <property type="entry name" value="CyoE_CtaB"/>
    <property type="match status" value="1"/>
</dbReference>
<dbReference type="InterPro" id="IPR006369">
    <property type="entry name" value="Protohaem_IX_farnesylTrfase"/>
</dbReference>
<dbReference type="InterPro" id="IPR000537">
    <property type="entry name" value="UbiA_prenyltransferase"/>
</dbReference>
<dbReference type="InterPro" id="IPR030470">
    <property type="entry name" value="UbiA_prenylTrfase_CS"/>
</dbReference>
<dbReference type="InterPro" id="IPR044878">
    <property type="entry name" value="UbiA_sf"/>
</dbReference>
<dbReference type="NCBIfam" id="TIGR01473">
    <property type="entry name" value="cyoE_ctaB"/>
    <property type="match status" value="1"/>
</dbReference>
<dbReference type="NCBIfam" id="NF003349">
    <property type="entry name" value="PRK04375.1-2"/>
    <property type="match status" value="1"/>
</dbReference>
<dbReference type="PANTHER" id="PTHR43448:SF7">
    <property type="entry name" value="4-HYDROXYBENZOATE SOLANESYLTRANSFERASE"/>
    <property type="match status" value="1"/>
</dbReference>
<dbReference type="PANTHER" id="PTHR43448">
    <property type="entry name" value="PROTOHEME IX FARNESYLTRANSFERASE, MITOCHONDRIAL"/>
    <property type="match status" value="1"/>
</dbReference>
<dbReference type="Pfam" id="PF01040">
    <property type="entry name" value="UbiA"/>
    <property type="match status" value="1"/>
</dbReference>
<dbReference type="PROSITE" id="PS00943">
    <property type="entry name" value="UBIA"/>
    <property type="match status" value="1"/>
</dbReference>
<keyword id="KW-0997">Cell inner membrane</keyword>
<keyword id="KW-1003">Cell membrane</keyword>
<keyword id="KW-0350">Heme biosynthesis</keyword>
<keyword id="KW-0472">Membrane</keyword>
<keyword id="KW-1185">Reference proteome</keyword>
<keyword id="KW-0808">Transferase</keyword>
<keyword id="KW-0812">Transmembrane</keyword>
<keyword id="KW-1133">Transmembrane helix</keyword>
<feature type="chain" id="PRO_0000326949" description="Protoheme IX farnesyltransferase">
    <location>
        <begin position="1"/>
        <end position="300"/>
    </location>
</feature>
<feature type="transmembrane region" description="Helical" evidence="1">
    <location>
        <begin position="28"/>
        <end position="48"/>
    </location>
</feature>
<feature type="transmembrane region" description="Helical" evidence="1">
    <location>
        <begin position="50"/>
        <end position="70"/>
    </location>
</feature>
<feature type="transmembrane region" description="Helical" evidence="1">
    <location>
        <begin position="100"/>
        <end position="120"/>
    </location>
</feature>
<feature type="transmembrane region" description="Helical" evidence="1">
    <location>
        <begin position="122"/>
        <end position="142"/>
    </location>
</feature>
<feature type="transmembrane region" description="Helical" evidence="1">
    <location>
        <begin position="149"/>
        <end position="169"/>
    </location>
</feature>
<feature type="transmembrane region" description="Helical" evidence="1">
    <location>
        <begin position="176"/>
        <end position="196"/>
    </location>
</feature>
<feature type="transmembrane region" description="Helical" evidence="1">
    <location>
        <begin position="222"/>
        <end position="242"/>
    </location>
</feature>
<feature type="transmembrane region" description="Helical" evidence="1">
    <location>
        <begin position="243"/>
        <end position="263"/>
    </location>
</feature>
<feature type="transmembrane region" description="Helical" evidence="1">
    <location>
        <begin position="280"/>
        <end position="300"/>
    </location>
</feature>
<name>CYOE_SHEON</name>
<accession>Q8E8P7</accession>
<reference key="1">
    <citation type="journal article" date="2002" name="Nat. Biotechnol.">
        <title>Genome sequence of the dissimilatory metal ion-reducing bacterium Shewanella oneidensis.</title>
        <authorList>
            <person name="Heidelberg J.F."/>
            <person name="Paulsen I.T."/>
            <person name="Nelson K.E."/>
            <person name="Gaidos E.J."/>
            <person name="Nelson W.C."/>
            <person name="Read T.D."/>
            <person name="Eisen J.A."/>
            <person name="Seshadri R."/>
            <person name="Ward N.L."/>
            <person name="Methe B.A."/>
            <person name="Clayton R.A."/>
            <person name="Meyer T."/>
            <person name="Tsapin A."/>
            <person name="Scott J."/>
            <person name="Beanan M.J."/>
            <person name="Brinkac L.M."/>
            <person name="Daugherty S.C."/>
            <person name="DeBoy R.T."/>
            <person name="Dodson R.J."/>
            <person name="Durkin A.S."/>
            <person name="Haft D.H."/>
            <person name="Kolonay J.F."/>
            <person name="Madupu R."/>
            <person name="Peterson J.D."/>
            <person name="Umayam L.A."/>
            <person name="White O."/>
            <person name="Wolf A.M."/>
            <person name="Vamathevan J.J."/>
            <person name="Weidman J.F."/>
            <person name="Impraim M."/>
            <person name="Lee K."/>
            <person name="Berry K.J."/>
            <person name="Lee C."/>
            <person name="Mueller J."/>
            <person name="Khouri H.M."/>
            <person name="Gill J."/>
            <person name="Utterback T.R."/>
            <person name="McDonald L.A."/>
            <person name="Feldblyum T.V."/>
            <person name="Smith H.O."/>
            <person name="Venter J.C."/>
            <person name="Nealson K.H."/>
            <person name="Fraser C.M."/>
        </authorList>
    </citation>
    <scope>NUCLEOTIDE SEQUENCE [LARGE SCALE GENOMIC DNA]</scope>
    <source>
        <strain>ATCC 700550 / JCM 31522 / CIP 106686 / LMG 19005 / NCIMB 14063 / MR-1</strain>
    </source>
</reference>